<gene>
    <name type="primary">SLC10A2</name>
    <name type="synonym">ASBT</name>
    <name type="synonym">ISBT</name>
    <name type="synonym">NTCP2</name>
</gene>
<name>NTCP2_HUMAN</name>
<accession>Q12908</accession>
<accession>A1L4F4</accession>
<accession>Q13839</accession>
<protein>
    <recommendedName>
        <fullName>Ileal sodium/bile acid cotransporter</fullName>
    </recommendedName>
    <alternativeName>
        <fullName>Apical sodium-dependent bile acid transporter</fullName>
        <shortName>ASBT</shortName>
    </alternativeName>
    <alternativeName>
        <fullName>Ileal Na(+)/bile acid cotransporter</fullName>
    </alternativeName>
    <alternativeName>
        <fullName>Ileal sodium-dependent bile acid transporter</fullName>
        <shortName>IBAT</shortName>
        <shortName>ISBT</shortName>
    </alternativeName>
    <alternativeName>
        <fullName>Na(+)-dependent ileal bile acid transporter</fullName>
    </alternativeName>
    <alternativeName>
        <fullName>Sodium/taurocholate cotransporting polypeptide, ileal</fullName>
    </alternativeName>
    <alternativeName>
        <fullName>Solute carrier family 10 member 2</fullName>
    </alternativeName>
</protein>
<feature type="chain" id="PRO_0000052339" description="Ileal sodium/bile acid cotransporter">
    <location>
        <begin position="1"/>
        <end position="348"/>
    </location>
</feature>
<feature type="topological domain" description="Extracellular" evidence="3">
    <location>
        <begin position="1"/>
        <end position="28"/>
    </location>
</feature>
<feature type="transmembrane region" description="Helical" evidence="3">
    <location>
        <begin position="29"/>
        <end position="49"/>
    </location>
</feature>
<feature type="topological domain" description="Cytoplasmic" evidence="3">
    <location>
        <begin position="50"/>
        <end position="82"/>
    </location>
</feature>
<feature type="transmembrane region" description="Helical" evidence="3">
    <location>
        <begin position="83"/>
        <end position="103"/>
    </location>
</feature>
<feature type="topological domain" description="Extracellular" evidence="3">
    <location>
        <begin position="104"/>
        <end position="126"/>
    </location>
</feature>
<feature type="transmembrane region" description="Helical" evidence="3">
    <location>
        <begin position="127"/>
        <end position="147"/>
    </location>
</feature>
<feature type="topological domain" description="Cytoplasmic" evidence="3">
    <location>
        <begin position="148"/>
        <end position="157"/>
    </location>
</feature>
<feature type="transmembrane region" description="Helical" evidence="3">
    <location>
        <begin position="158"/>
        <end position="178"/>
    </location>
</feature>
<feature type="topological domain" description="Extracellular" evidence="3">
    <location>
        <begin position="179"/>
        <end position="195"/>
    </location>
</feature>
<feature type="transmembrane region" description="Helical" evidence="3">
    <location>
        <begin position="196"/>
        <end position="216"/>
    </location>
</feature>
<feature type="topological domain" description="Cytoplasmic" evidence="3">
    <location>
        <begin position="217"/>
        <end position="224"/>
    </location>
</feature>
<feature type="transmembrane region" description="Helical" evidence="3">
    <location>
        <begin position="225"/>
        <end position="245"/>
    </location>
</feature>
<feature type="topological domain" description="Extracellular" evidence="3">
    <location>
        <begin position="246"/>
        <end position="284"/>
    </location>
</feature>
<feature type="transmembrane region" description="Helical" evidence="3">
    <location>
        <begin position="285"/>
        <end position="305"/>
    </location>
</feature>
<feature type="topological domain" description="Cytoplasmic" evidence="3">
    <location>
        <begin position="306"/>
        <end position="348"/>
    </location>
</feature>
<feature type="region of interest" description="Disordered" evidence="4">
    <location>
        <begin position="320"/>
        <end position="348"/>
    </location>
</feature>
<feature type="compositionally biased region" description="Basic and acidic residues" evidence="4">
    <location>
        <begin position="320"/>
        <end position="329"/>
    </location>
</feature>
<feature type="site" description="Not glycosylated">
    <location>
        <position position="328"/>
    </location>
</feature>
<feature type="modified residue" description="Phosphoserine" evidence="1">
    <location>
        <position position="335"/>
    </location>
</feature>
<feature type="glycosylation site" description="N-linked (GlcNAc...) asparagine" evidence="9">
    <location>
        <position position="10"/>
    </location>
</feature>
<feature type="sequence variant" id="VAR_024837" description="In dbSNP:rs55971546." evidence="5 6">
    <original>V</original>
    <variation>I</variation>
    <location>
        <position position="98"/>
    </location>
</feature>
<feature type="sequence variant" id="VAR_024838" description="In dbSNP:rs60380298." evidence="6">
    <original>V</original>
    <variation>I</variation>
    <location>
        <position position="159"/>
    </location>
</feature>
<feature type="sequence variant" id="VAR_004613" description="In dbSNP:rs188096." evidence="5 6 7 8 10 11 12">
    <original>S</original>
    <variation>A</variation>
    <location>
        <position position="171"/>
    </location>
</feature>
<feature type="sequence variant" id="VAR_004614" description="In PBAM1; abolishes taurocholate transport; dbSNP:rs121917848." evidence="12">
    <original>L</original>
    <variation>P</variation>
    <location>
        <position position="243"/>
    </location>
</feature>
<feature type="sequence variant" id="VAR_004615" description="In PBAM1; abolishes taurocholate transport; dbSNP:rs72547505." evidence="12">
    <original>T</original>
    <variation>M</variation>
    <location>
        <position position="262"/>
    </location>
</feature>
<feature type="sequence variant" id="VAR_004616" description="Found in a patient with Crohn disease; abolishes taurocholate transport; dbSNP:rs56398830." evidence="11">
    <original>P</original>
    <variation>S</variation>
    <location>
        <position position="290"/>
    </location>
</feature>
<feature type="mutagenesis site" description="Abolishes glycosylation." evidence="9">
    <original>N</original>
    <variation>D</variation>
    <location>
        <position position="10"/>
    </location>
</feature>
<feature type="mutagenesis site" description="No effect on glycosylation." evidence="9">
    <original>N</original>
    <variation>D</variation>
    <location>
        <position position="328"/>
    </location>
</feature>
<reference key="1">
    <citation type="journal article" date="1995" name="J. Biol. Chem.">
        <title>Identification of a mutation in the ileal sodium-dependent bile acid transporter gene that abolishes transport activity.</title>
        <authorList>
            <person name="Wong M.H."/>
            <person name="Oelkers P."/>
            <person name="Dawson P.A."/>
        </authorList>
    </citation>
    <scope>NUCLEOTIDE SEQUENCE [MRNA]</scope>
    <scope>VARIANTS ALA-171 AND SER-290</scope>
    <scope>TRANSPORT ACTIVITY</scope>
    <scope>BIOPHYSICOCHEMICAL PROPERTIES</scope>
    <source>
        <tissue>Ileum</tissue>
    </source>
</reference>
<reference key="2">
    <citation type="journal article" date="1998" name="Am. J. Physiol.">
        <title>Expression and transport properties of the human ileal and renal sodium-dependent bile acid transporter.</title>
        <authorList>
            <person name="Craddock A.L."/>
            <person name="Love M.W."/>
            <person name="Daniel R.W."/>
            <person name="Kirby L.C."/>
            <person name="Walters H.C."/>
            <person name="Wong M.H."/>
            <person name="Dawson P.A."/>
        </authorList>
    </citation>
    <scope>NUCLEOTIDE SEQUENCE [MRNA]</scope>
    <scope>FUNCTION</scope>
    <scope>TRANSPORT ACTIVITY</scope>
    <scope>TISSUE SPECIFICITY</scope>
    <scope>BIOPHYSICOCHEMICAL PROPERTIES</scope>
</reference>
<reference key="3">
    <citation type="journal article" date="1997" name="J. Clin. Invest.">
        <title>Primary bile acid malabsorption caused by mutations in the ileal sodium-dependent bile acid transporter gene (SLC10A2).</title>
        <authorList>
            <person name="Oelkers P."/>
            <person name="Kirby L.C."/>
            <person name="Heubi J.E."/>
            <person name="Dawson P.A."/>
        </authorList>
    </citation>
    <scope>NUCLEOTIDE SEQUENCE [GENOMIC DNA]</scope>
    <scope>VARIANTS PBAM1 PRO-243 AND MET-262</scope>
    <scope>VARIANT ALA-171</scope>
</reference>
<reference key="4">
    <citation type="journal article" date="2002" name="Proc. Natl. Acad. Sci. U.S.A.">
        <title>Genetic and physiological data implicating the new human gene G72 and the gene for D-amino acid oxidase in schizophrenia.</title>
        <authorList>
            <person name="Chumakov I."/>
            <person name="Blumenfeld M."/>
            <person name="Guerassimenko O."/>
            <person name="Cavarec L."/>
            <person name="Palicio M."/>
            <person name="Abderrahim H."/>
            <person name="Bougueleret L."/>
            <person name="Barry C."/>
            <person name="Tanaka H."/>
            <person name="La Rosa P."/>
            <person name="Puech A."/>
            <person name="Tahri N."/>
            <person name="Cohen-Akenine A."/>
            <person name="Delabrosse S."/>
            <person name="Lissarrague S."/>
            <person name="Picard F.-P."/>
            <person name="Maurice K."/>
            <person name="Essioux L."/>
            <person name="Millasseau P."/>
            <person name="Grel P."/>
            <person name="Debailleul V."/>
            <person name="Simon A.-M."/>
            <person name="Caterina D."/>
            <person name="Dufaure I."/>
            <person name="Malekzadeh K."/>
            <person name="Belova M."/>
            <person name="Luan J.-J."/>
            <person name="Bouillot M."/>
            <person name="Sambucy J.-L."/>
            <person name="Primas G."/>
            <person name="Saumier M."/>
            <person name="Boubkiri N."/>
            <person name="Martin-Saumier S."/>
            <person name="Nasroune M."/>
            <person name="Peixoto H."/>
            <person name="Delaye A."/>
            <person name="Pinchot V."/>
            <person name="Bastucci M."/>
            <person name="Guillou S."/>
            <person name="Chevillon M."/>
            <person name="Sainz-Fuertes R."/>
            <person name="Meguenni S."/>
            <person name="Aurich-Costa J."/>
            <person name="Cherif D."/>
            <person name="Gimalac A."/>
            <person name="Van Duijn C."/>
            <person name="Gauvreau D."/>
            <person name="Ouellette G."/>
            <person name="Fortier I."/>
            <person name="Raelson J."/>
            <person name="Sherbatich T."/>
            <person name="Riazanskay N."/>
            <person name="Rogaev E."/>
            <person name="Raeymaekers P."/>
            <person name="Aerssens J."/>
            <person name="Konings F."/>
            <person name="Luyten W."/>
            <person name="Macciardi F."/>
            <person name="Sham P.C."/>
            <person name="Straub R.E."/>
            <person name="Weinberger D.R."/>
            <person name="Cohen N."/>
            <person name="Cohen D."/>
        </authorList>
    </citation>
    <scope>NUCLEOTIDE SEQUENCE [GENOMIC DNA]</scope>
    <scope>VARIANT ALA-171</scope>
</reference>
<reference key="5">
    <citation type="journal article" date="2004" name="Nature">
        <title>The DNA sequence and analysis of human chromosome 13.</title>
        <authorList>
            <person name="Dunham A."/>
            <person name="Matthews L.H."/>
            <person name="Burton J."/>
            <person name="Ashurst J.L."/>
            <person name="Howe K.L."/>
            <person name="Ashcroft K.J."/>
            <person name="Beare D.M."/>
            <person name="Burford D.C."/>
            <person name="Hunt S.E."/>
            <person name="Griffiths-Jones S."/>
            <person name="Jones M.C."/>
            <person name="Keenan S.J."/>
            <person name="Oliver K."/>
            <person name="Scott C.E."/>
            <person name="Ainscough R."/>
            <person name="Almeida J.P."/>
            <person name="Ambrose K.D."/>
            <person name="Andrews D.T."/>
            <person name="Ashwell R.I.S."/>
            <person name="Babbage A.K."/>
            <person name="Bagguley C.L."/>
            <person name="Bailey J."/>
            <person name="Bannerjee R."/>
            <person name="Barlow K.F."/>
            <person name="Bates K."/>
            <person name="Beasley H."/>
            <person name="Bird C.P."/>
            <person name="Bray-Allen S."/>
            <person name="Brown A.J."/>
            <person name="Brown J.Y."/>
            <person name="Burrill W."/>
            <person name="Carder C."/>
            <person name="Carter N.P."/>
            <person name="Chapman J.C."/>
            <person name="Clamp M.E."/>
            <person name="Clark S.Y."/>
            <person name="Clarke G."/>
            <person name="Clee C.M."/>
            <person name="Clegg S.C."/>
            <person name="Cobley V."/>
            <person name="Collins J.E."/>
            <person name="Corby N."/>
            <person name="Coville G.J."/>
            <person name="Deloukas P."/>
            <person name="Dhami P."/>
            <person name="Dunham I."/>
            <person name="Dunn M."/>
            <person name="Earthrowl M.E."/>
            <person name="Ellington A.G."/>
            <person name="Faulkner L."/>
            <person name="Frankish A.G."/>
            <person name="Frankland J."/>
            <person name="French L."/>
            <person name="Garner P."/>
            <person name="Garnett J."/>
            <person name="Gilbert J.G.R."/>
            <person name="Gilson C.J."/>
            <person name="Ghori J."/>
            <person name="Grafham D.V."/>
            <person name="Gribble S.M."/>
            <person name="Griffiths C."/>
            <person name="Hall R.E."/>
            <person name="Hammond S."/>
            <person name="Harley J.L."/>
            <person name="Hart E.A."/>
            <person name="Heath P.D."/>
            <person name="Howden P.J."/>
            <person name="Huckle E.J."/>
            <person name="Hunt P.J."/>
            <person name="Hunt A.R."/>
            <person name="Johnson C."/>
            <person name="Johnson D."/>
            <person name="Kay M."/>
            <person name="Kimberley A.M."/>
            <person name="King A."/>
            <person name="Laird G.K."/>
            <person name="Langford C.J."/>
            <person name="Lawlor S."/>
            <person name="Leongamornlert D.A."/>
            <person name="Lloyd D.M."/>
            <person name="Lloyd C."/>
            <person name="Loveland J.E."/>
            <person name="Lovell J."/>
            <person name="Martin S."/>
            <person name="Mashreghi-Mohammadi M."/>
            <person name="McLaren S.J."/>
            <person name="McMurray A."/>
            <person name="Milne S."/>
            <person name="Moore M.J.F."/>
            <person name="Nickerson T."/>
            <person name="Palmer S.A."/>
            <person name="Pearce A.V."/>
            <person name="Peck A.I."/>
            <person name="Pelan S."/>
            <person name="Phillimore B."/>
            <person name="Porter K.M."/>
            <person name="Rice C.M."/>
            <person name="Searle S."/>
            <person name="Sehra H.K."/>
            <person name="Shownkeen R."/>
            <person name="Skuce C.D."/>
            <person name="Smith M."/>
            <person name="Steward C.A."/>
            <person name="Sycamore N."/>
            <person name="Tester J."/>
            <person name="Thomas D.W."/>
            <person name="Tracey A."/>
            <person name="Tromans A."/>
            <person name="Tubby B."/>
            <person name="Wall M."/>
            <person name="Wallis J.M."/>
            <person name="West A.P."/>
            <person name="Whitehead S.L."/>
            <person name="Willey D.L."/>
            <person name="Wilming L."/>
            <person name="Wray P.W."/>
            <person name="Wright M.W."/>
            <person name="Young L."/>
            <person name="Coulson A."/>
            <person name="Durbin R.M."/>
            <person name="Hubbard T."/>
            <person name="Sulston J.E."/>
            <person name="Beck S."/>
            <person name="Bentley D.R."/>
            <person name="Rogers J."/>
            <person name="Ross M.T."/>
        </authorList>
    </citation>
    <scope>NUCLEOTIDE SEQUENCE [LARGE SCALE GENOMIC DNA]</scope>
    <scope>VARIANT ALA-171</scope>
</reference>
<reference key="6">
    <citation type="submission" date="2005-07" db="EMBL/GenBank/DDBJ databases">
        <authorList>
            <person name="Mural R.J."/>
            <person name="Istrail S."/>
            <person name="Sutton G.G."/>
            <person name="Florea L."/>
            <person name="Halpern A.L."/>
            <person name="Mobarry C.M."/>
            <person name="Lippert R."/>
            <person name="Walenz B."/>
            <person name="Shatkay H."/>
            <person name="Dew I."/>
            <person name="Miller J.R."/>
            <person name="Flanigan M.J."/>
            <person name="Edwards N.J."/>
            <person name="Bolanos R."/>
            <person name="Fasulo D."/>
            <person name="Halldorsson B.V."/>
            <person name="Hannenhalli S."/>
            <person name="Turner R."/>
            <person name="Yooseph S."/>
            <person name="Lu F."/>
            <person name="Nusskern D.R."/>
            <person name="Shue B.C."/>
            <person name="Zheng X.H."/>
            <person name="Zhong F."/>
            <person name="Delcher A.L."/>
            <person name="Huson D.H."/>
            <person name="Kravitz S.A."/>
            <person name="Mouchard L."/>
            <person name="Reinert K."/>
            <person name="Remington K.A."/>
            <person name="Clark A.G."/>
            <person name="Waterman M.S."/>
            <person name="Eichler E.E."/>
            <person name="Adams M.D."/>
            <person name="Hunkapiller M.W."/>
            <person name="Myers E.W."/>
            <person name="Venter J.C."/>
        </authorList>
    </citation>
    <scope>NUCLEOTIDE SEQUENCE [LARGE SCALE GENOMIC DNA]</scope>
</reference>
<reference key="7">
    <citation type="journal article" date="2004" name="Genome Res.">
        <title>The status, quality, and expansion of the NIH full-length cDNA project: the Mammalian Gene Collection (MGC).</title>
        <authorList>
            <consortium name="The MGC Project Team"/>
        </authorList>
    </citation>
    <scope>NUCLEOTIDE SEQUENCE [LARGE SCALE MRNA]</scope>
    <scope>VARIANT ALA-171</scope>
</reference>
<reference key="8">
    <citation type="submission" date="1997-10" db="EMBL/GenBank/DDBJ databases">
        <title>Human ileal sodium-dependent bile acid transporter gene (promoter, exon 1 and intron 1).</title>
        <authorList>
            <person name="Stengelin S."/>
            <person name="Becker W."/>
            <person name="Maier M."/>
            <person name="Rosenberger J."/>
            <person name="Kramer W."/>
        </authorList>
    </citation>
    <scope>NUCLEOTIDE SEQUENCE [GENOMIC DNA] OF 1-22</scope>
    <source>
        <tissue>Blood</tissue>
    </source>
</reference>
<reference key="9">
    <citation type="journal article" date="1998" name="J. Biol. Chem.">
        <title>Bile acid uptake via the human apical sodium-bile acid cotransporter is electrogenic.</title>
        <authorList>
            <person name="Weinman S.A."/>
            <person name="Carruth M.W."/>
            <person name="Dawson P.A."/>
        </authorList>
    </citation>
    <scope>FUNCTION</scope>
    <scope>TRANSPORT ACTIVITY</scope>
    <scope>BIOPHYSICOCHEMICAL PROPERTIES</scope>
</reference>
<reference key="10">
    <citation type="journal article" date="2004" name="Biochemistry">
        <title>Topology scanning and putative three-dimensional structure of the extracellular binding domains of the apical sodium-dependent bile acid transporter (SLC10A2).</title>
        <authorList>
            <person name="Zhang E.Y."/>
            <person name="Phelps M.A."/>
            <person name="Banerjee A."/>
            <person name="Khantwal C.M."/>
            <person name="Chang C."/>
            <person name="Helsper F."/>
            <person name="Swaan P.W."/>
        </authorList>
    </citation>
    <scope>GLYCOSYLATION AT ASN-10</scope>
    <scope>MUTAGENESIS OF ASN-10 AND ASN-328</scope>
    <scope>TOPOLOGY</scope>
</reference>
<reference key="11">
    <citation type="journal article" date="2021" name="Hepatology">
        <title>Targeting the Four Pillars of Enterohepatic Bile Salt Cycling; Lessons From Genetics and Pharmacology.</title>
        <authorList>
            <person name="Kunst R.F."/>
            <person name="Verkade H.J."/>
            <person name="Oude Elferink R.P.J."/>
            <person name="van de Graaf S.F.J."/>
        </authorList>
    </citation>
    <scope>FUNCTION</scope>
</reference>
<reference key="12">
    <citation type="journal article" date="2001" name="Arterioscler. Thromb. Vasc. Biol.">
        <title>Analysis of the ileal bile acid transporter gene, SLC10A2, in subjects with familial hypertriglyceridemia.</title>
        <authorList>
            <person name="Love M.W."/>
            <person name="Craddock A.L."/>
            <person name="Angelin B."/>
            <person name="Brunzell J.D."/>
            <person name="Duane W.C."/>
            <person name="Dawson P.A."/>
        </authorList>
    </citation>
    <scope>VARIANTS ILE-98; ILE-159 AND ALA-171</scope>
</reference>
<reference key="13">
    <citation type="journal article" date="2001" name="Scand. J. Gastroenterol.">
        <title>Absence of dysfunctional ileal sodium-bile acid cotransporter gene mutations in patients with adult-onset idiopathic bile acid malabsorption.</title>
        <authorList>
            <person name="Montagnani M."/>
            <person name="Love M.W."/>
            <person name="Rossel P."/>
            <person name="Dawson P.A."/>
            <person name="Qvist P."/>
        </authorList>
    </citation>
    <scope>VARIANTS ILE-98 AND ALA-171</scope>
</reference>
<dbReference type="EMBL" id="U10417">
    <property type="protein sequence ID" value="AAC51870.1"/>
    <property type="molecule type" value="mRNA"/>
</dbReference>
<dbReference type="EMBL" id="U67674">
    <property type="protein sequence ID" value="AAC95398.1"/>
    <property type="molecule type" value="Genomic_DNA"/>
</dbReference>
<dbReference type="EMBL" id="U67669">
    <property type="protein sequence ID" value="AAC95398.1"/>
    <property type="status" value="JOINED"/>
    <property type="molecule type" value="Genomic_DNA"/>
</dbReference>
<dbReference type="EMBL" id="U67670">
    <property type="protein sequence ID" value="AAC95398.1"/>
    <property type="status" value="JOINED"/>
    <property type="molecule type" value="Genomic_DNA"/>
</dbReference>
<dbReference type="EMBL" id="U67671">
    <property type="protein sequence ID" value="AAC95398.1"/>
    <property type="status" value="JOINED"/>
    <property type="molecule type" value="Genomic_DNA"/>
</dbReference>
<dbReference type="EMBL" id="U67672">
    <property type="protein sequence ID" value="AAC95398.1"/>
    <property type="status" value="JOINED"/>
    <property type="molecule type" value="Genomic_DNA"/>
</dbReference>
<dbReference type="EMBL" id="U67673">
    <property type="protein sequence ID" value="AAC95398.1"/>
    <property type="status" value="JOINED"/>
    <property type="molecule type" value="Genomic_DNA"/>
</dbReference>
<dbReference type="EMBL" id="AE014294">
    <property type="protein sequence ID" value="AAN16026.1"/>
    <property type="molecule type" value="Genomic_DNA"/>
</dbReference>
<dbReference type="EMBL" id="AL161771">
    <property type="status" value="NOT_ANNOTATED_CDS"/>
    <property type="molecule type" value="Genomic_DNA"/>
</dbReference>
<dbReference type="EMBL" id="CH471085">
    <property type="protein sequence ID" value="EAX09074.1"/>
    <property type="molecule type" value="Genomic_DNA"/>
</dbReference>
<dbReference type="EMBL" id="BC130521">
    <property type="protein sequence ID" value="AAI30522.1"/>
    <property type="molecule type" value="mRNA"/>
</dbReference>
<dbReference type="EMBL" id="BC130523">
    <property type="protein sequence ID" value="AAI30524.1"/>
    <property type="molecule type" value="mRNA"/>
</dbReference>
<dbReference type="EMBL" id="Z54350">
    <property type="protein sequence ID" value="CAA91161.1"/>
    <property type="molecule type" value="Genomic_DNA"/>
</dbReference>
<dbReference type="CCDS" id="CCDS9506.1"/>
<dbReference type="PIR" id="I38655">
    <property type="entry name" value="I38655"/>
</dbReference>
<dbReference type="RefSeq" id="NP_000443.2">
    <property type="nucleotide sequence ID" value="NM_000452.3"/>
</dbReference>
<dbReference type="SMR" id="Q12908"/>
<dbReference type="BioGRID" id="112444">
    <property type="interactions" value="12"/>
</dbReference>
<dbReference type="CORUM" id="Q12908"/>
<dbReference type="FunCoup" id="Q12908">
    <property type="interactions" value="64"/>
</dbReference>
<dbReference type="IntAct" id="Q12908">
    <property type="interactions" value="12"/>
</dbReference>
<dbReference type="STRING" id="9606.ENSP00000245312"/>
<dbReference type="BindingDB" id="Q12908"/>
<dbReference type="ChEMBL" id="CHEMBL2778"/>
<dbReference type="DrugBank" id="DB00787">
    <property type="generic name" value="Acyclovir"/>
</dbReference>
<dbReference type="DrugBank" id="DB02659">
    <property type="generic name" value="Cholic Acid"/>
</dbReference>
<dbReference type="DrugBank" id="DB00091">
    <property type="generic name" value="Cyclosporine"/>
</dbReference>
<dbReference type="DrugBank" id="DB03619">
    <property type="generic name" value="Deoxycholic acid"/>
</dbReference>
<dbReference type="DrugBank" id="DB12486">
    <property type="generic name" value="Elobixibat"/>
</dbReference>
<dbReference type="DrugBank" id="DB02123">
    <property type="generic name" value="Glycochenodeoxycholic Acid"/>
</dbReference>
<dbReference type="DrugBank" id="DB09237">
    <property type="generic name" value="Levamlodipine"/>
</dbReference>
<dbReference type="DrugBank" id="DB11729">
    <property type="generic name" value="Linerixibat"/>
</dbReference>
<dbReference type="DrugBank" id="DB16226">
    <property type="generic name" value="Maralixibat"/>
</dbReference>
<dbReference type="DrugBank" id="DB16261">
    <property type="generic name" value="Odevixibat"/>
</dbReference>
<dbReference type="DrugBank" id="DB04348">
    <property type="generic name" value="Taurocholic acid"/>
</dbReference>
<dbReference type="DrugBank" id="DB01586">
    <property type="generic name" value="Ursodeoxycholic acid"/>
</dbReference>
<dbReference type="DrugBank" id="DB00577">
    <property type="generic name" value="Valaciclovir"/>
</dbReference>
<dbReference type="DrugBank" id="DB13914">
    <property type="generic name" value="Volixibat"/>
</dbReference>
<dbReference type="DrugCentral" id="Q12908"/>
<dbReference type="GuidetoPHARMACOLOGY" id="960"/>
<dbReference type="TCDB" id="2.A.28.1.2">
    <property type="family name" value="the bile acid:na(+) symporter (bass) family"/>
</dbReference>
<dbReference type="GlyCosmos" id="Q12908">
    <property type="glycosylation" value="1 site, No reported glycans"/>
</dbReference>
<dbReference type="GlyGen" id="Q12908">
    <property type="glycosylation" value="1 site"/>
</dbReference>
<dbReference type="iPTMnet" id="Q12908"/>
<dbReference type="PhosphoSitePlus" id="Q12908"/>
<dbReference type="SwissPalm" id="Q12908"/>
<dbReference type="BioMuta" id="SLC10A2"/>
<dbReference type="DMDM" id="322510055"/>
<dbReference type="MassIVE" id="Q12908"/>
<dbReference type="PaxDb" id="9606-ENSP00000245312"/>
<dbReference type="PeptideAtlas" id="Q12908"/>
<dbReference type="Antibodypedia" id="11241">
    <property type="antibodies" value="187 antibodies from 30 providers"/>
</dbReference>
<dbReference type="DNASU" id="6555"/>
<dbReference type="Ensembl" id="ENST00000245312.5">
    <property type="protein sequence ID" value="ENSP00000245312.3"/>
    <property type="gene ID" value="ENSG00000125255.7"/>
</dbReference>
<dbReference type="GeneID" id="6555"/>
<dbReference type="KEGG" id="hsa:6555"/>
<dbReference type="MANE-Select" id="ENST00000245312.5">
    <property type="protein sequence ID" value="ENSP00000245312.3"/>
    <property type="RefSeq nucleotide sequence ID" value="NM_000452.3"/>
    <property type="RefSeq protein sequence ID" value="NP_000443.2"/>
</dbReference>
<dbReference type="UCSC" id="uc001vpy.4">
    <property type="organism name" value="human"/>
</dbReference>
<dbReference type="AGR" id="HGNC:10906"/>
<dbReference type="CTD" id="6555"/>
<dbReference type="DisGeNET" id="6555"/>
<dbReference type="GeneCards" id="SLC10A2"/>
<dbReference type="HGNC" id="HGNC:10906">
    <property type="gene designation" value="SLC10A2"/>
</dbReference>
<dbReference type="HPA" id="ENSG00000125255">
    <property type="expression patterns" value="Tissue enriched (intestine)"/>
</dbReference>
<dbReference type="MalaCards" id="SLC10A2"/>
<dbReference type="MIM" id="601295">
    <property type="type" value="gene"/>
</dbReference>
<dbReference type="MIM" id="613291">
    <property type="type" value="phenotype"/>
</dbReference>
<dbReference type="neXtProt" id="NX_Q12908"/>
<dbReference type="OpenTargets" id="ENSG00000125255"/>
<dbReference type="PharmGKB" id="PA318"/>
<dbReference type="VEuPathDB" id="HostDB:ENSG00000125255"/>
<dbReference type="eggNOG" id="KOG2718">
    <property type="taxonomic scope" value="Eukaryota"/>
</dbReference>
<dbReference type="GeneTree" id="ENSGT00950000182808"/>
<dbReference type="HOGENOM" id="CLU_034788_7_5_1"/>
<dbReference type="InParanoid" id="Q12908"/>
<dbReference type="OMA" id="WGNGLRM"/>
<dbReference type="OrthoDB" id="203097at2759"/>
<dbReference type="PAN-GO" id="Q12908">
    <property type="GO annotations" value="3 GO annotations based on evolutionary models"/>
</dbReference>
<dbReference type="PhylomeDB" id="Q12908"/>
<dbReference type="TreeFam" id="TF315811"/>
<dbReference type="PathwayCommons" id="Q12908"/>
<dbReference type="Reactome" id="R-HSA-159418">
    <property type="pathway name" value="Recycling of bile acids and salts"/>
</dbReference>
<dbReference type="SignaLink" id="Q12908"/>
<dbReference type="BioGRID-ORCS" id="6555">
    <property type="hits" value="6 hits in 1140 CRISPR screens"/>
</dbReference>
<dbReference type="GeneWiki" id="SLC10A2"/>
<dbReference type="GenomeRNAi" id="6555"/>
<dbReference type="Pharos" id="Q12908">
    <property type="development level" value="Tclin"/>
</dbReference>
<dbReference type="PRO" id="PR:Q12908"/>
<dbReference type="Proteomes" id="UP000005640">
    <property type="component" value="Chromosome 13"/>
</dbReference>
<dbReference type="RNAct" id="Q12908">
    <property type="molecule type" value="protein"/>
</dbReference>
<dbReference type="Bgee" id="ENSG00000125255">
    <property type="expression patterns" value="Expressed in ileal mucosa and 35 other cell types or tissues"/>
</dbReference>
<dbReference type="GO" id="GO:0016324">
    <property type="term" value="C:apical plasma membrane"/>
    <property type="evidence" value="ECO:0000318"/>
    <property type="project" value="GO_Central"/>
</dbReference>
<dbReference type="GO" id="GO:0005902">
    <property type="term" value="C:microvillus"/>
    <property type="evidence" value="ECO:0007669"/>
    <property type="project" value="Ensembl"/>
</dbReference>
<dbReference type="GO" id="GO:0005886">
    <property type="term" value="C:plasma membrane"/>
    <property type="evidence" value="ECO:0000304"/>
    <property type="project" value="Reactome"/>
</dbReference>
<dbReference type="GO" id="GO:0008508">
    <property type="term" value="F:bile acid:sodium symporter activity"/>
    <property type="evidence" value="ECO:0000318"/>
    <property type="project" value="GO_Central"/>
</dbReference>
<dbReference type="GO" id="GO:0015721">
    <property type="term" value="P:bile acid and bile salt transport"/>
    <property type="evidence" value="ECO:0000318"/>
    <property type="project" value="GO_Central"/>
</dbReference>
<dbReference type="GO" id="GO:0009617">
    <property type="term" value="P:response to bacterium"/>
    <property type="evidence" value="ECO:0007669"/>
    <property type="project" value="Ensembl"/>
</dbReference>
<dbReference type="FunFam" id="1.20.1530.20:FF:000010">
    <property type="entry name" value="Solute carrier family 10 member 6"/>
    <property type="match status" value="1"/>
</dbReference>
<dbReference type="Gene3D" id="1.20.1530.20">
    <property type="match status" value="1"/>
</dbReference>
<dbReference type="InterPro" id="IPR002657">
    <property type="entry name" value="BilAc:Na_symport/Acr3"/>
</dbReference>
<dbReference type="InterPro" id="IPR004710">
    <property type="entry name" value="Bilac:Na_transpt"/>
</dbReference>
<dbReference type="InterPro" id="IPR038770">
    <property type="entry name" value="Na+/solute_symporter_sf"/>
</dbReference>
<dbReference type="NCBIfam" id="TIGR00841">
    <property type="entry name" value="bass"/>
    <property type="match status" value="1"/>
</dbReference>
<dbReference type="PANTHER" id="PTHR10361:SF19">
    <property type="entry name" value="ILEAL SODIUM_BILE ACID COTRANSPORTER"/>
    <property type="match status" value="1"/>
</dbReference>
<dbReference type="PANTHER" id="PTHR10361">
    <property type="entry name" value="SODIUM-BILE ACID COTRANSPORTER"/>
    <property type="match status" value="1"/>
</dbReference>
<dbReference type="Pfam" id="PF01758">
    <property type="entry name" value="SBF"/>
    <property type="match status" value="1"/>
</dbReference>
<keyword id="KW-0225">Disease variant</keyword>
<keyword id="KW-0325">Glycoprotein</keyword>
<keyword id="KW-0406">Ion transport</keyword>
<keyword id="KW-0445">Lipid transport</keyword>
<keyword id="KW-0472">Membrane</keyword>
<keyword id="KW-0597">Phosphoprotein</keyword>
<keyword id="KW-1267">Proteomics identification</keyword>
<keyword id="KW-1185">Reference proteome</keyword>
<keyword id="KW-0915">Sodium</keyword>
<keyword id="KW-0739">Sodium transport</keyword>
<keyword id="KW-0769">Symport</keyword>
<keyword id="KW-0812">Transmembrane</keyword>
<keyword id="KW-1133">Transmembrane helix</keyword>
<keyword id="KW-0813">Transport</keyword>
<sequence>MNDPNSCVDNATVCSGASCVVPESNFNNILSVVLSTVLTILLALVMFSMGCNVEIKKFLGHIKRPWGICVGFLCQFGIMPLTGFILSVAFDILPLQAVVVLIIGCCPGGTASNILAYWVDGDMDLSVSMTTCSTLLALGMMPLCLLIYTKMWVDSGSIVIPYDNIGTSLVSLVVPVSIGMFVNHKWPQKAKIILKIGSIAGAILIVLIAVVGGILYQSAWIIAPKLWIIGTIFPVAGYSLGFLLARIAGLPWYRCRTVAFETGMQNTQLCSTIVQLSFTPEELNVVFTFPLIYSIFQLAFAAIFLGFYVAYKKCHGKNKAEIPESKENGTEPESSFYKANGGFQPDEK</sequence>
<evidence type="ECO:0000250" key="1">
    <source>
        <dbReference type="UniProtKB" id="P70172"/>
    </source>
</evidence>
<evidence type="ECO:0000250" key="2">
    <source>
        <dbReference type="UniProtKB" id="Q28727"/>
    </source>
</evidence>
<evidence type="ECO:0000255" key="3"/>
<evidence type="ECO:0000256" key="4">
    <source>
        <dbReference type="SAM" id="MobiDB-lite"/>
    </source>
</evidence>
<evidence type="ECO:0000269" key="5">
    <source>
    </source>
</evidence>
<evidence type="ECO:0000269" key="6">
    <source>
    </source>
</evidence>
<evidence type="ECO:0000269" key="7">
    <source>
    </source>
</evidence>
<evidence type="ECO:0000269" key="8">
    <source>
    </source>
</evidence>
<evidence type="ECO:0000269" key="9">
    <source>
    </source>
</evidence>
<evidence type="ECO:0000269" key="10">
    <source>
    </source>
</evidence>
<evidence type="ECO:0000269" key="11">
    <source>
    </source>
</evidence>
<evidence type="ECO:0000269" key="12">
    <source>
    </source>
</evidence>
<evidence type="ECO:0000269" key="13">
    <source>
    </source>
</evidence>
<evidence type="ECO:0000269" key="14">
    <source>
    </source>
</evidence>
<evidence type="ECO:0000303" key="15">
    <source>
    </source>
</evidence>
<evidence type="ECO:0000305" key="16"/>
<evidence type="ECO:0000305" key="17">
    <source>
    </source>
</evidence>
<organism>
    <name type="scientific">Homo sapiens</name>
    <name type="common">Human</name>
    <dbReference type="NCBI Taxonomy" id="9606"/>
    <lineage>
        <taxon>Eukaryota</taxon>
        <taxon>Metazoa</taxon>
        <taxon>Chordata</taxon>
        <taxon>Craniata</taxon>
        <taxon>Vertebrata</taxon>
        <taxon>Euteleostomi</taxon>
        <taxon>Mammalia</taxon>
        <taxon>Eutheria</taxon>
        <taxon>Euarchontoglires</taxon>
        <taxon>Primates</taxon>
        <taxon>Haplorrhini</taxon>
        <taxon>Catarrhini</taxon>
        <taxon>Hominidae</taxon>
        <taxon>Homo</taxon>
    </lineage>
</organism>
<comment type="function">
    <text evidence="11 13 14 15 17">Plays a critical role in the sodium-dependent reabsorption of bile acids from the lumen of the small intestine (PubMed:7592981, PubMed:9458785, PubMed:9856990). Transports various bile acids, unconjugated or conjugated, such as cholate and taurocholate (PubMed:7592981, PubMed:9458785, PubMed:9856990). Also responsible for bile acid transport in the renal proximal tubules, a salvage mechanism that helps conserve bile acids (Probable). Works collaboratively with the Na(+)-taurocholate cotransporting polypeptide (NTCP), the organic solute transporter (OST), and the bile salt export pump (BSEP), to ensure efficacious biological recycling of bile acids during enterohepatic circulation (PubMed:33222321).</text>
</comment>
<comment type="catalytic activity">
    <reaction evidence="11 13 14">
        <text>taurocholate(out) + 2 Na(+)(out) = taurocholate(in) + 2 Na(+)(in)</text>
        <dbReference type="Rhea" id="RHEA:71875"/>
        <dbReference type="ChEBI" id="CHEBI:29101"/>
        <dbReference type="ChEBI" id="CHEBI:36257"/>
    </reaction>
</comment>
<comment type="catalytic activity">
    <reaction evidence="13 14">
        <text>cholate(out) + 2 Na(+)(out) = cholate(in) + 2 Na(+)(in)</text>
        <dbReference type="Rhea" id="RHEA:71911"/>
        <dbReference type="ChEBI" id="CHEBI:29101"/>
        <dbReference type="ChEBI" id="CHEBI:29747"/>
    </reaction>
</comment>
<comment type="catalytic activity">
    <reaction evidence="2">
        <text>taurochenodeoxycholate(out) + 2 Na(+)(out) = taurochenodeoxycholate(in) + 2 Na(+)(in)</text>
        <dbReference type="Rhea" id="RHEA:71923"/>
        <dbReference type="ChEBI" id="CHEBI:9407"/>
        <dbReference type="ChEBI" id="CHEBI:29101"/>
    </reaction>
</comment>
<comment type="catalytic activity">
    <reaction evidence="2">
        <text>tauroursodeoxycholate(out) + 2 Na(+)(out) = tauroursodeoxycholate(in) + 2 Na(+)(in)</text>
        <dbReference type="Rhea" id="RHEA:71927"/>
        <dbReference type="ChEBI" id="CHEBI:29101"/>
        <dbReference type="ChEBI" id="CHEBI:132028"/>
    </reaction>
</comment>
<comment type="catalytic activity">
    <reaction evidence="2">
        <text>glycocholate(out) + 2 Na(+)(out) = glycocholate(in) + 2 Na(+)(in)</text>
        <dbReference type="Rhea" id="RHEA:71935"/>
        <dbReference type="ChEBI" id="CHEBI:29101"/>
        <dbReference type="ChEBI" id="CHEBI:29746"/>
    </reaction>
</comment>
<comment type="catalytic activity">
    <reaction evidence="2">
        <text>tauronorcholate(out) + 2 Na(+)(out) = tauronorcholate(in) + 2 Na(+)(in)</text>
        <dbReference type="Rhea" id="RHEA:71915"/>
        <dbReference type="ChEBI" id="CHEBI:29101"/>
        <dbReference type="ChEBI" id="CHEBI:191405"/>
    </reaction>
</comment>
<comment type="catalytic activity">
    <reaction evidence="2">
        <text>tauroallocholate(out) + 2 Na(+)(out) = tauroallocholate(in) + 2 Na(+)(in)</text>
        <dbReference type="Rhea" id="RHEA:51840"/>
        <dbReference type="ChEBI" id="CHEBI:29101"/>
        <dbReference type="ChEBI" id="CHEBI:191406"/>
    </reaction>
</comment>
<comment type="catalytic activity">
    <reaction evidence="2">
        <text>taurodeoxycholate(out) + 2 Na(+)(out) = taurodeoxycholate(in) + 2 Na(+)(in)</text>
        <dbReference type="Rhea" id="RHEA:72087"/>
        <dbReference type="ChEBI" id="CHEBI:29101"/>
        <dbReference type="ChEBI" id="CHEBI:36261"/>
    </reaction>
</comment>
<comment type="catalytic activity">
    <reaction evidence="2">
        <text>tauro-beta-muricholate(out) + 2 Na(+)(out) = tauro-beta-muricholate(in) + 2 Na(+)(in)</text>
        <dbReference type="Rhea" id="RHEA:72179"/>
        <dbReference type="ChEBI" id="CHEBI:29101"/>
        <dbReference type="ChEBI" id="CHEBI:133064"/>
    </reaction>
</comment>
<comment type="biophysicochemical properties">
    <kinetics>
        <KM evidence="11">17 uM for taurocholate</KM>
        <KM evidence="13">13.3 uM for taurocholate</KM>
        <KM evidence="14">12 uM for taurocholate</KM>
        <KM evidence="13">33.3 uM for cholate</KM>
        <KM evidence="14">37 uM for cholate</KM>
        <KM evidence="13">2 uM for glycodeoxycholate</KM>
        <KM evidence="13">5.7 uM for glycochenodeoxycholate</KM>
        <KM evidence="13">4.1 uM for glycoursodeoxycholate</KM>
        <Vmax evidence="11">96.0 pmol/min/mg enzyme with taurocholate as substrate</Vmax>
        <Vmax evidence="13">48.0 pmol/min/mg enzyme with taurocholate as substrate</Vmax>
    </kinetics>
</comment>
<comment type="subunit">
    <text>Monomer and homodimer.</text>
</comment>
<comment type="interaction">
    <interactant intactId="EBI-18114847">
        <id>Q12908</id>
    </interactant>
    <interactant intactId="EBI-10271156">
        <id>Q8NHW4</id>
        <label>CCL4L2</label>
    </interactant>
    <organismsDiffer>false</organismsDiffer>
    <experiments>3</experiments>
</comment>
<comment type="interaction">
    <interactant intactId="EBI-18114847">
        <id>Q12908</id>
    </interactant>
    <interactant intactId="EBI-12019274">
        <id>Q4LDR2</id>
        <label>CTXN3</label>
    </interactant>
    <organismsDiffer>false</organismsDiffer>
    <experiments>3</experiments>
</comment>
<comment type="interaction">
    <interactant intactId="EBI-18114847">
        <id>Q12908</id>
    </interactant>
    <interactant intactId="EBI-1753674">
        <id>P52803</id>
        <label>EFNA5</label>
    </interactant>
    <organismsDiffer>false</organismsDiffer>
    <experiments>3</experiments>
</comment>
<comment type="interaction">
    <interactant intactId="EBI-18114847">
        <id>Q12908</id>
    </interactant>
    <interactant intactId="EBI-7932862">
        <id>Q01628</id>
        <label>IFITM3</label>
    </interactant>
    <organismsDiffer>false</organismsDiffer>
    <experiments>3</experiments>
</comment>
<comment type="interaction">
    <interactant intactId="EBI-18114847">
        <id>Q12908</id>
    </interactant>
    <interactant intactId="EBI-10262547">
        <id>Q8IXM6</id>
        <label>NRM</label>
    </interactant>
    <organismsDiffer>false</organismsDiffer>
    <experiments>3</experiments>
</comment>
<comment type="interaction">
    <interactant intactId="EBI-18114847">
        <id>Q12908</id>
    </interactant>
    <interactant intactId="EBI-998468">
        <id>Q9NZ42</id>
        <label>PSENEN</label>
    </interactant>
    <organismsDiffer>false</organismsDiffer>
    <experiments>3</experiments>
</comment>
<comment type="interaction">
    <interactant intactId="EBI-18114847">
        <id>Q12908</id>
    </interactant>
    <interactant intactId="EBI-10329860">
        <id>Q9Y6I9</id>
        <label>TEX264</label>
    </interactant>
    <organismsDiffer>false</organismsDiffer>
    <experiments>3</experiments>
</comment>
<comment type="interaction">
    <interactant intactId="EBI-18114847">
        <id>Q12908</id>
    </interactant>
    <interactant intactId="EBI-347385">
        <id>Q9H0R3</id>
        <label>TMEM222</label>
    </interactant>
    <organismsDiffer>false</organismsDiffer>
    <experiments>3</experiments>
</comment>
<comment type="interaction">
    <interactant intactId="EBI-18114847">
        <id>Q12908</id>
    </interactant>
    <interactant intactId="EBI-10243654">
        <id>Q5BVD1</id>
        <label>TTMP</label>
    </interactant>
    <organismsDiffer>false</organismsDiffer>
    <experiments>3</experiments>
</comment>
<comment type="interaction">
    <interactant intactId="EBI-18114847">
        <id>Q12908</id>
    </interactant>
    <interactant intactId="EBI-12237619">
        <id>O75841</id>
        <label>UPK1B</label>
    </interactant>
    <organismsDiffer>false</organismsDiffer>
    <experiments>3</experiments>
</comment>
<comment type="subcellular location">
    <subcellularLocation>
        <location>Membrane</location>
        <topology>Multi-pass membrane protein</topology>
    </subcellularLocation>
</comment>
<comment type="tissue specificity">
    <text evidence="13">Mainly expressed in ileum and kidney, lower expression in cecum.</text>
</comment>
<comment type="disease" evidence="12">
    <disease id="DI-02198">
        <name>Bile acid malabsorption, primary, 1</name>
        <acronym>PBAM1</acronym>
        <description>An autosomal recessive intestinal disorder associated with chronic watery diarrhea, excess fecal bile acids, steatorrhea and interruption of the enterohepatic circulation of bile acids.</description>
        <dbReference type="MIM" id="613291"/>
    </disease>
    <text>The disease is caused by variants affecting the gene represented in this entry.</text>
</comment>
<comment type="similarity">
    <text evidence="16">Belongs to the bile acid:sodium symporter (BASS) (TC 2.A.28) family.</text>
</comment>
<proteinExistence type="evidence at protein level"/>